<comment type="function">
    <text evidence="4 7">The phosphoenolpyruvate-dependent sugar phosphotransferase system (sugar PTS), a major carbohydrate active transport system, catalyzes the phosphorylation of incoming sugar substrates concomitantly with their translocation across the cell membrane (Probable). This system is involved in sucrose transport (PubMed:8628219).</text>
</comment>
<comment type="catalytic activity">
    <reaction evidence="7">
        <text>N(pros)-phospho-L-histidyl-[protein](out) + sucrose = sucrose 6(G)-phosphate(in) + L-histidyl-[protein]</text>
        <dbReference type="Rhea" id="RHEA:49236"/>
        <dbReference type="Rhea" id="RHEA-COMP:9745"/>
        <dbReference type="Rhea" id="RHEA-COMP:9746"/>
        <dbReference type="ChEBI" id="CHEBI:17992"/>
        <dbReference type="ChEBI" id="CHEBI:29979"/>
        <dbReference type="ChEBI" id="CHEBI:64837"/>
        <dbReference type="ChEBI" id="CHEBI:91002"/>
        <dbReference type="EC" id="2.7.1.211"/>
    </reaction>
</comment>
<comment type="subcellular location">
    <subcellularLocation>
        <location evidence="7">Cell inner membrane</location>
        <topology evidence="1">Multi-pass membrane protein</topology>
    </subcellularLocation>
</comment>
<comment type="domain">
    <text evidence="2">The PTS EIIB type-1 domain is phosphorylated by phospho-EIIA on a cysteinyl residue. Then, it transfers the phosphoryl group to the sugar substrate concomitantly with the sugar uptake processed by the PTS EIIC type-1 domain.</text>
</comment>
<comment type="domain">
    <text evidence="3">The EIIC domain type-1 forms the PTS system translocation channel and contains the specific substrate-binding site.</text>
</comment>
<protein>
    <recommendedName>
        <fullName evidence="6">PTS system sucrose-specific EIIBC component</fullName>
    </recommendedName>
    <alternativeName>
        <fullName>EIIBC-Scr</fullName>
        <shortName>EII-Scr</shortName>
    </alternativeName>
    <domain>
        <recommendedName>
            <fullName>Sucrose-specific phosphotransferase enzyme IIB component</fullName>
            <ecNumber evidence="7">2.7.1.211</ecNumber>
        </recommendedName>
        <alternativeName>
            <fullName>PTS system sucrose-specific EIIB component</fullName>
        </alternativeName>
    </domain>
    <domain>
        <recommendedName>
            <fullName>Sucrose permease IIC component</fullName>
        </recommendedName>
        <alternativeName>
            <fullName>PTS system sucrose-specific EIIC component</fullName>
        </alternativeName>
    </domain>
</protein>
<proteinExistence type="inferred from homology"/>
<evidence type="ECO:0000255" key="1"/>
<evidence type="ECO:0000255" key="2">
    <source>
        <dbReference type="PROSITE-ProRule" id="PRU00421"/>
    </source>
</evidence>
<evidence type="ECO:0000255" key="3">
    <source>
        <dbReference type="PROSITE-ProRule" id="PRU00426"/>
    </source>
</evidence>
<evidence type="ECO:0000269" key="4">
    <source>
    </source>
</evidence>
<evidence type="ECO:0000303" key="5">
    <source>
    </source>
</evidence>
<evidence type="ECO:0000305" key="6"/>
<evidence type="ECO:0000305" key="7">
    <source>
    </source>
</evidence>
<reference key="1">
    <citation type="journal article" date="1988" name="Mol. Microbiol.">
        <title>DNA sequence of the gene scrA encoding the sucrose transport protein EnzymeII(Scr) of the phosphotransferase system from enteric bacteria: homology of the EnzymeII(Scr) and EnzymeII(Bgl) proteins.</title>
        <authorList>
            <person name="Ebner R."/>
            <person name="Lengeler J.W."/>
        </authorList>
    </citation>
    <scope>NUCLEOTIDE SEQUENCE [GENOMIC DNA]</scope>
</reference>
<reference key="2">
    <citation type="journal article" date="1993" name="Mol. Microbiol.">
        <title>Molecular analysis of two ScrR repressors and of a ScrR-FruR hybrid repressor for sucrose and D-fructose specific regulons from enteric bacteria.</title>
        <authorList>
            <person name="Jahreis K."/>
            <person name="Lengeler J.W."/>
        </authorList>
    </citation>
    <scope>SEQUENCE REVISION</scope>
</reference>
<reference key="3">
    <citation type="journal article" date="1996" name="Mol. Gen. Genet.">
        <title>Molecular analysis of the scrA and scrB genes from Klebsiella pneumoniae and plasmid pUR400, which encode the sucrose transport protein Enzyme II Scr of the phosphotransferase system and a sucrose-6-phosphate invertase.</title>
        <authorList>
            <person name="Titgemeyer F."/>
            <person name="Jahreis K."/>
            <person name="Ebner R."/>
            <person name="Lengeler J.W."/>
        </authorList>
    </citation>
    <scope>NUCLEOTIDE SEQUENCE [GENOMIC DNA]</scope>
    <scope>FUNCTION</scope>
</reference>
<reference key="4">
    <citation type="journal article" date="1991" name="J. Bacteriol.">
        <title>Plasmid-mediated sucrose metabolism in Escherichia coli: characterization of scrY, the structural gene for a phosphoenolpyruvate-dependent sucrose phosphotransferase system outer membrane porin.</title>
        <authorList>
            <person name="Hardesty C."/>
            <person name="Ferran C."/>
            <person name="DiRienzo J.M."/>
        </authorList>
    </citation>
    <scope>NUCLEOTIDE SEQUENCE [GENOMIC DNA] OF 1-7</scope>
    <source>
        <strain>6153-62</strain>
    </source>
</reference>
<name>PTSBC_SALTM</name>
<feature type="chain" id="PRO_0000186670" description="PTS system sucrose-specific EIIBC component">
    <location>
        <begin position="1"/>
        <end position="456"/>
    </location>
</feature>
<feature type="transmembrane region" description="Helical" evidence="3">
    <location>
        <begin position="112"/>
        <end position="132"/>
    </location>
</feature>
<feature type="transmembrane region" description="Helical" evidence="3">
    <location>
        <begin position="144"/>
        <end position="164"/>
    </location>
</feature>
<feature type="transmembrane region" description="Helical" evidence="3">
    <location>
        <begin position="181"/>
        <end position="201"/>
    </location>
</feature>
<feature type="transmembrane region" description="Helical" evidence="3">
    <location>
        <begin position="213"/>
        <end position="233"/>
    </location>
</feature>
<feature type="transmembrane region" description="Helical" evidence="3">
    <location>
        <begin position="247"/>
        <end position="267"/>
    </location>
</feature>
<feature type="transmembrane region" description="Helical" evidence="3">
    <location>
        <begin position="288"/>
        <end position="308"/>
    </location>
</feature>
<feature type="transmembrane region" description="Helical" evidence="3">
    <location>
        <begin position="329"/>
        <end position="349"/>
    </location>
</feature>
<feature type="transmembrane region" description="Helical" evidence="3">
    <location>
        <begin position="360"/>
        <end position="380"/>
    </location>
</feature>
<feature type="transmembrane region" description="Helical" evidence="3">
    <location>
        <begin position="388"/>
        <end position="408"/>
    </location>
</feature>
<feature type="transmembrane region" description="Helical" evidence="3">
    <location>
        <begin position="428"/>
        <end position="448"/>
    </location>
</feature>
<feature type="domain" description="PTS EIIB type-1" evidence="2">
    <location>
        <begin position="4"/>
        <end position="87"/>
    </location>
</feature>
<feature type="domain" description="PTS EIIC type-1" evidence="3">
    <location>
        <begin position="107"/>
        <end position="456"/>
    </location>
</feature>
<feature type="active site" description="Phosphocysteine intermediate; for EIIB activity" evidence="2">
    <location>
        <position position="26"/>
    </location>
</feature>
<dbReference type="EC" id="2.7.1.211" evidence="7"/>
<dbReference type="EMBL" id="Y00541">
    <property type="protein sequence ID" value="CAA68605.1"/>
    <property type="status" value="ALT_SEQ"/>
    <property type="molecule type" value="Genomic_DNA"/>
</dbReference>
<dbReference type="EMBL" id="X67750">
    <property type="protein sequence ID" value="CAA47973.1"/>
    <property type="molecule type" value="Genomic_DNA"/>
</dbReference>
<dbReference type="EMBL" id="M38416">
    <property type="protein sequence ID" value="AAA98418.1"/>
    <property type="molecule type" value="Genomic_DNA"/>
</dbReference>
<dbReference type="PIR" id="B39127">
    <property type="entry name" value="B39127"/>
</dbReference>
<dbReference type="PIR" id="S01036">
    <property type="entry name" value="WQEBST"/>
</dbReference>
<dbReference type="SMR" id="P08470"/>
<dbReference type="TCDB" id="4.A.1.2.1">
    <property type="family name" value="the pts glucose-glucoside (glc) family"/>
</dbReference>
<dbReference type="BRENDA" id="2.7.1.211">
    <property type="organism ID" value="5542"/>
</dbReference>
<dbReference type="GO" id="GO:0005886">
    <property type="term" value="C:plasma membrane"/>
    <property type="evidence" value="ECO:0007669"/>
    <property type="project" value="UniProtKB-SubCell"/>
</dbReference>
<dbReference type="GO" id="GO:0016301">
    <property type="term" value="F:kinase activity"/>
    <property type="evidence" value="ECO:0007669"/>
    <property type="project" value="UniProtKB-KW"/>
</dbReference>
<dbReference type="GO" id="GO:0022878">
    <property type="term" value="F:protein-N(PI)-phosphohistidine-sucrose phosphotransferase system transporter activity"/>
    <property type="evidence" value="ECO:0007669"/>
    <property type="project" value="RHEA"/>
</dbReference>
<dbReference type="GO" id="GO:0090589">
    <property type="term" value="F:protein-phosphocysteine-trehalose phosphotransferase system transporter activity"/>
    <property type="evidence" value="ECO:0007669"/>
    <property type="project" value="TreeGrafter"/>
</dbReference>
<dbReference type="GO" id="GO:0009401">
    <property type="term" value="P:phosphoenolpyruvate-dependent sugar phosphotransferase system"/>
    <property type="evidence" value="ECO:0007669"/>
    <property type="project" value="UniProtKB-KW"/>
</dbReference>
<dbReference type="GO" id="GO:0015771">
    <property type="term" value="P:trehalose transport"/>
    <property type="evidence" value="ECO:0007669"/>
    <property type="project" value="TreeGrafter"/>
</dbReference>
<dbReference type="CDD" id="cd00212">
    <property type="entry name" value="PTS_IIB_glc"/>
    <property type="match status" value="1"/>
</dbReference>
<dbReference type="FunFam" id="3.30.1360.60:FF:000001">
    <property type="entry name" value="PTS system glucose-specific IIBC component PtsG"/>
    <property type="match status" value="1"/>
</dbReference>
<dbReference type="Gene3D" id="3.30.1360.60">
    <property type="entry name" value="Glucose permease domain IIB"/>
    <property type="match status" value="1"/>
</dbReference>
<dbReference type="InterPro" id="IPR036878">
    <property type="entry name" value="Glu_permease_IIB"/>
</dbReference>
<dbReference type="InterPro" id="IPR018113">
    <property type="entry name" value="PTrfase_EIIB_Cys"/>
</dbReference>
<dbReference type="InterPro" id="IPR003352">
    <property type="entry name" value="PTS_EIIC"/>
</dbReference>
<dbReference type="InterPro" id="IPR013013">
    <property type="entry name" value="PTS_EIIC_1"/>
</dbReference>
<dbReference type="InterPro" id="IPR001996">
    <property type="entry name" value="PTS_IIB_1"/>
</dbReference>
<dbReference type="InterPro" id="IPR010973">
    <property type="entry name" value="PTS_IIBC_sucr"/>
</dbReference>
<dbReference type="InterPro" id="IPR004719">
    <property type="entry name" value="PTS_maltose/Glc_sub_IIC"/>
</dbReference>
<dbReference type="InterPro" id="IPR050558">
    <property type="entry name" value="PTS_Sugar-Specific_Components"/>
</dbReference>
<dbReference type="NCBIfam" id="TIGR00826">
    <property type="entry name" value="EIIB_glc"/>
    <property type="match status" value="1"/>
</dbReference>
<dbReference type="NCBIfam" id="TIGR00852">
    <property type="entry name" value="pts-Glc"/>
    <property type="match status" value="1"/>
</dbReference>
<dbReference type="NCBIfam" id="TIGR01996">
    <property type="entry name" value="PTS-II-BC-sucr"/>
    <property type="match status" value="1"/>
</dbReference>
<dbReference type="PANTHER" id="PTHR30175:SF7">
    <property type="entry name" value="NEGATIVE REGULATOR OF SACY ACTIVITY"/>
    <property type="match status" value="1"/>
</dbReference>
<dbReference type="PANTHER" id="PTHR30175">
    <property type="entry name" value="PHOSPHOTRANSFERASE SYSTEM TRANSPORT PROTEIN"/>
    <property type="match status" value="1"/>
</dbReference>
<dbReference type="Pfam" id="PF00367">
    <property type="entry name" value="PTS_EIIB"/>
    <property type="match status" value="1"/>
</dbReference>
<dbReference type="Pfam" id="PF02378">
    <property type="entry name" value="PTS_EIIC"/>
    <property type="match status" value="1"/>
</dbReference>
<dbReference type="SUPFAM" id="SSF55604">
    <property type="entry name" value="Glucose permease domain IIB"/>
    <property type="match status" value="1"/>
</dbReference>
<dbReference type="PROSITE" id="PS51098">
    <property type="entry name" value="PTS_EIIB_TYPE_1"/>
    <property type="match status" value="1"/>
</dbReference>
<dbReference type="PROSITE" id="PS01035">
    <property type="entry name" value="PTS_EIIB_TYPE_1_CYS"/>
    <property type="match status" value="1"/>
</dbReference>
<dbReference type="PROSITE" id="PS51103">
    <property type="entry name" value="PTS_EIIC_TYPE_1"/>
    <property type="match status" value="1"/>
</dbReference>
<accession>P08470</accession>
<sequence>MDFEQISCSLLPLLGGKENIASAAHCATRLRLVLVDDSLADQQAIGKVEGVKGCFRNAGQMQIIFGTGVVNKVYAAFTQAAGISESSKSEAADIAAKKLNPFQRIARLLSNIFVPIIPAIVASGLLMGLLGMVKTYGWVDPGNAIYIMLDMCSSAAFIILPILIGFTAAREFGGNPYLGATLGGILTHPALTNAWGVAAGFHTMNFFGFEIAMIGYQGTVFPVLLAVWFMSIVEKQLRRAIPDALDLILTPFLTVIISGFIALLIIGPAGRALGDGISFVLSTLISHAGWLAGLLFGGLYSVIVITGIHHSFHAVEAGLLGNPSIGVNFLLPIWAMANVAQGGACLAVWFKTKDAKIKAITLPSAFSAMLGITEAAIFGINLRFVKPFIAALIGGAAGGAWVVSVHVYMTAVGLTAIPGMAIVQASSLLNYIIGMVIAFGVAFTVSLVLKYKTDAE</sequence>
<geneLocation type="plasmid">
    <name>pUR400</name>
</geneLocation>
<gene>
    <name evidence="5" type="primary">scrA</name>
</gene>
<keyword id="KW-0997">Cell inner membrane</keyword>
<keyword id="KW-1003">Cell membrane</keyword>
<keyword id="KW-0418">Kinase</keyword>
<keyword id="KW-0472">Membrane</keyword>
<keyword id="KW-0598">Phosphotransferase system</keyword>
<keyword id="KW-0614">Plasmid</keyword>
<keyword id="KW-0762">Sugar transport</keyword>
<keyword id="KW-0808">Transferase</keyword>
<keyword id="KW-0812">Transmembrane</keyword>
<keyword id="KW-1133">Transmembrane helix</keyword>
<keyword id="KW-0813">Transport</keyword>
<organism>
    <name type="scientific">Salmonella typhimurium</name>
    <dbReference type="NCBI Taxonomy" id="90371"/>
    <lineage>
        <taxon>Bacteria</taxon>
        <taxon>Pseudomonadati</taxon>
        <taxon>Pseudomonadota</taxon>
        <taxon>Gammaproteobacteria</taxon>
        <taxon>Enterobacterales</taxon>
        <taxon>Enterobacteriaceae</taxon>
        <taxon>Salmonella</taxon>
    </lineage>
</organism>